<protein>
    <recommendedName>
        <fullName evidence="1">(4S)-4-hydroxy-5-phosphonooxypentane-2,3-dione isomerase</fullName>
        <ecNumber evidence="1">5.3.1.32</ecNumber>
    </recommendedName>
    <alternativeName>
        <fullName evidence="1">Autoinducer 2-degrading protein LsrG</fullName>
        <shortName evidence="1">AI-2-degrading protein LsrG</shortName>
    </alternativeName>
    <alternativeName>
        <fullName evidence="1">Phospho-(S)-4,5-dihydroxy-2,3-pentanedione isomerase</fullName>
    </alternativeName>
    <alternativeName>
        <fullName evidence="1">Phospho-AI-2 isomerase</fullName>
    </alternativeName>
</protein>
<evidence type="ECO:0000255" key="1">
    <source>
        <dbReference type="HAMAP-Rule" id="MF_02051"/>
    </source>
</evidence>
<sequence>MHVTLVEINVHEDKVDEFIEVFRQNHLGSVQEEGNLRFDVLQDPEVNSRFYIYEAYKDEDAVAFHKTTPHYKTSVAKLESLMTGPRKKRLFNGLMP</sequence>
<keyword id="KW-0963">Cytoplasm</keyword>
<keyword id="KW-0413">Isomerase</keyword>
<comment type="function">
    <text evidence="1">Involved in the degradation of phospho-AI-2, thereby terminating induction of the lsr operon and closing the AI-2 signaling cycle. Catalyzes the conversion of (4S)-4-hydroxy-5-phosphonooxypentane-2,3-dione (P-DPD) to 3-hydroxy-5-phosphonooxypentane-2,4-dione (P-HPD).</text>
</comment>
<comment type="catalytic activity">
    <reaction evidence="1">
        <text>(2S)-2-hydroxy-3,4-dioxopentyl phosphate = 3-hydroxy-2,4-dioxopentyl phosphate</text>
        <dbReference type="Rhea" id="RHEA:44360"/>
        <dbReference type="ChEBI" id="CHEBI:71677"/>
        <dbReference type="ChEBI" id="CHEBI:84359"/>
        <dbReference type="EC" id="5.3.1.32"/>
    </reaction>
</comment>
<comment type="subunit">
    <text evidence="1">Homodimer.</text>
</comment>
<comment type="subcellular location">
    <subcellularLocation>
        <location evidence="1">Cytoplasm</location>
    </subcellularLocation>
</comment>
<comment type="similarity">
    <text evidence="1">Belongs to the LsrG family.</text>
</comment>
<proteinExistence type="inferred from homology"/>
<dbReference type="EC" id="5.3.1.32" evidence="1"/>
<dbReference type="EMBL" id="CP000802">
    <property type="protein sequence ID" value="ABV05925.1"/>
    <property type="molecule type" value="Genomic_DNA"/>
</dbReference>
<dbReference type="RefSeq" id="WP_000558530.1">
    <property type="nucleotide sequence ID" value="NC_009800.1"/>
</dbReference>
<dbReference type="SMR" id="A8A071"/>
<dbReference type="KEGG" id="ecx:EcHS_A1600"/>
<dbReference type="HOGENOM" id="CLU_131496_3_0_6"/>
<dbReference type="GO" id="GO:0005829">
    <property type="term" value="C:cytosol"/>
    <property type="evidence" value="ECO:0007669"/>
    <property type="project" value="TreeGrafter"/>
</dbReference>
<dbReference type="GO" id="GO:0002952">
    <property type="term" value="F:(4S)-4-hydroxy-5-phosphonooxypentane-2,3-dione isomerase activity"/>
    <property type="evidence" value="ECO:0007669"/>
    <property type="project" value="UniProtKB-EC"/>
</dbReference>
<dbReference type="GO" id="GO:0016491">
    <property type="term" value="F:oxidoreductase activity"/>
    <property type="evidence" value="ECO:0007669"/>
    <property type="project" value="TreeGrafter"/>
</dbReference>
<dbReference type="FunFam" id="3.30.70.100:FF:000016">
    <property type="entry name" value="(4S)-4-hydroxy-5-phosphonooxypentane-2,3-dione isomerase"/>
    <property type="match status" value="1"/>
</dbReference>
<dbReference type="Gene3D" id="3.30.70.100">
    <property type="match status" value="1"/>
</dbReference>
<dbReference type="HAMAP" id="MF_02051">
    <property type="entry name" value="LsrG"/>
    <property type="match status" value="1"/>
</dbReference>
<dbReference type="InterPro" id="IPR007138">
    <property type="entry name" value="ABM_dom"/>
</dbReference>
<dbReference type="InterPro" id="IPR050744">
    <property type="entry name" value="AI-2_Isomerase_LsrG"/>
</dbReference>
<dbReference type="InterPro" id="IPR011008">
    <property type="entry name" value="Dimeric_a/b-barrel"/>
</dbReference>
<dbReference type="InterPro" id="IPR033672">
    <property type="entry name" value="LsrG"/>
</dbReference>
<dbReference type="NCBIfam" id="NF007791">
    <property type="entry name" value="PRK10486.1"/>
    <property type="match status" value="1"/>
</dbReference>
<dbReference type="PANTHER" id="PTHR33336:SF1">
    <property type="entry name" value="(4S)-4-HYDROXY-5-PHOSPHONOOXYPENTANE-2,3-DIONE ISOMERASE"/>
    <property type="match status" value="1"/>
</dbReference>
<dbReference type="PANTHER" id="PTHR33336">
    <property type="entry name" value="QUINOL MONOOXYGENASE YGIN-RELATED"/>
    <property type="match status" value="1"/>
</dbReference>
<dbReference type="Pfam" id="PF03992">
    <property type="entry name" value="ABM"/>
    <property type="match status" value="1"/>
</dbReference>
<dbReference type="SUPFAM" id="SSF54909">
    <property type="entry name" value="Dimeric alpha+beta barrel"/>
    <property type="match status" value="1"/>
</dbReference>
<dbReference type="PROSITE" id="PS51725">
    <property type="entry name" value="ABM"/>
    <property type="match status" value="1"/>
</dbReference>
<accession>A8A071</accession>
<name>LSRG_ECOHS</name>
<organism>
    <name type="scientific">Escherichia coli O9:H4 (strain HS)</name>
    <dbReference type="NCBI Taxonomy" id="331112"/>
    <lineage>
        <taxon>Bacteria</taxon>
        <taxon>Pseudomonadati</taxon>
        <taxon>Pseudomonadota</taxon>
        <taxon>Gammaproteobacteria</taxon>
        <taxon>Enterobacterales</taxon>
        <taxon>Enterobacteriaceae</taxon>
        <taxon>Escherichia</taxon>
    </lineage>
</organism>
<gene>
    <name evidence="1" type="primary">lsrG</name>
    <name type="ordered locus">EcHS_A1600</name>
</gene>
<feature type="chain" id="PRO_0000351566" description="(4S)-4-hydroxy-5-phosphonooxypentane-2,3-dione isomerase">
    <location>
        <begin position="1"/>
        <end position="96"/>
    </location>
</feature>
<feature type="domain" description="ABM" evidence="1">
    <location>
        <begin position="2"/>
        <end position="91"/>
    </location>
</feature>
<reference key="1">
    <citation type="journal article" date="2008" name="J. Bacteriol.">
        <title>The pangenome structure of Escherichia coli: comparative genomic analysis of E. coli commensal and pathogenic isolates.</title>
        <authorList>
            <person name="Rasko D.A."/>
            <person name="Rosovitz M.J."/>
            <person name="Myers G.S.A."/>
            <person name="Mongodin E.F."/>
            <person name="Fricke W.F."/>
            <person name="Gajer P."/>
            <person name="Crabtree J."/>
            <person name="Sebaihia M."/>
            <person name="Thomson N.R."/>
            <person name="Chaudhuri R."/>
            <person name="Henderson I.R."/>
            <person name="Sperandio V."/>
            <person name="Ravel J."/>
        </authorList>
    </citation>
    <scope>NUCLEOTIDE SEQUENCE [LARGE SCALE GENOMIC DNA]</scope>
    <source>
        <strain>HS</strain>
    </source>
</reference>